<name>ING3_XENTR</name>
<comment type="function">
    <text evidence="1">Component of the NuA4 histone acetyltransferase (HAT) complex which is involved in transcriptional activation of select genes principally by acetylation of nucleosomal histone H4 and H2A. This modification may both alter nucleosome - DNA interactions and promote interaction of the modified histones with other proteins which positively regulate transcription (By similarity). NuA4 may also play a direct role in DNA repair when directly recruited to sites of DNA damage (By similarity).</text>
</comment>
<comment type="subunit">
    <text evidence="1">Interacts with H3K4me3 and to a lesser extent with H3K4me2. Component of the NuA4 histone acetyltransferase complex.</text>
</comment>
<comment type="subcellular location">
    <subcellularLocation>
        <location evidence="1">Nucleus</location>
    </subcellularLocation>
</comment>
<comment type="domain">
    <text evidence="1">The PHD-type zinc finger mediates the binding to H3K4me3.</text>
</comment>
<comment type="similarity">
    <text evidence="5">Belongs to the ING family.</text>
</comment>
<reference key="1">
    <citation type="submission" date="2006-10" db="EMBL/GenBank/DDBJ databases">
        <authorList>
            <consortium name="Sanger Xenopus tropicalis EST/cDNA project"/>
        </authorList>
    </citation>
    <scope>NUCLEOTIDE SEQUENCE [LARGE SCALE MRNA]</scope>
    <source>
        <tissue>Neurula</tissue>
    </source>
</reference>
<reference key="2">
    <citation type="submission" date="2004-08" db="EMBL/GenBank/DDBJ databases">
        <authorList>
            <consortium name="NIH - Xenopus Gene Collection (XGC) project"/>
        </authorList>
    </citation>
    <scope>NUCLEOTIDE SEQUENCE [LARGE SCALE MRNA]</scope>
    <source>
        <tissue>Embryo</tissue>
    </source>
</reference>
<dbReference type="EMBL" id="CR848341">
    <property type="protein sequence ID" value="CAJ83008.1"/>
    <property type="molecule type" value="mRNA"/>
</dbReference>
<dbReference type="EMBL" id="BC080450">
    <property type="protein sequence ID" value="AAH80450.1"/>
    <property type="molecule type" value="mRNA"/>
</dbReference>
<dbReference type="RefSeq" id="NP_001008672.1">
    <property type="nucleotide sequence ID" value="NM_001008672.2"/>
</dbReference>
<dbReference type="RefSeq" id="XP_031753707.1">
    <property type="nucleotide sequence ID" value="XM_031897847.1"/>
</dbReference>
<dbReference type="BMRB" id="Q66KD5"/>
<dbReference type="SMR" id="Q66KD5"/>
<dbReference type="FunCoup" id="Q66KD5">
    <property type="interactions" value="2643"/>
</dbReference>
<dbReference type="STRING" id="8364.ENSXETP00000050369"/>
<dbReference type="DNASU" id="493319"/>
<dbReference type="GeneID" id="493319"/>
<dbReference type="KEGG" id="xtr:493319"/>
<dbReference type="AGR" id="Xenbase:XB-GENE-972305"/>
<dbReference type="CTD" id="54556"/>
<dbReference type="Xenbase" id="XB-GENE-972305">
    <property type="gene designation" value="ing3"/>
</dbReference>
<dbReference type="InParanoid" id="Q66KD5"/>
<dbReference type="OMA" id="YEWFHWK"/>
<dbReference type="OrthoDB" id="5411773at2759"/>
<dbReference type="Proteomes" id="UP000008143">
    <property type="component" value="Chromosome 3"/>
</dbReference>
<dbReference type="GO" id="GO:0000812">
    <property type="term" value="C:Swr1 complex"/>
    <property type="evidence" value="ECO:0000250"/>
    <property type="project" value="UniProtKB"/>
</dbReference>
<dbReference type="GO" id="GO:0008270">
    <property type="term" value="F:zinc ion binding"/>
    <property type="evidence" value="ECO:0007669"/>
    <property type="project" value="UniProtKB-KW"/>
</dbReference>
<dbReference type="GO" id="GO:0006338">
    <property type="term" value="P:chromatin remodeling"/>
    <property type="evidence" value="ECO:0007669"/>
    <property type="project" value="GOC"/>
</dbReference>
<dbReference type="CDD" id="cd16858">
    <property type="entry name" value="ING_ING3_Yng2p"/>
    <property type="match status" value="1"/>
</dbReference>
<dbReference type="CDD" id="cd15585">
    <property type="entry name" value="PHD_ING3"/>
    <property type="match status" value="1"/>
</dbReference>
<dbReference type="FunFam" id="3.30.40.10:FF:000103">
    <property type="entry name" value="Inhibitor of growth protein"/>
    <property type="match status" value="1"/>
</dbReference>
<dbReference type="Gene3D" id="6.10.140.1740">
    <property type="match status" value="1"/>
</dbReference>
<dbReference type="Gene3D" id="3.30.40.10">
    <property type="entry name" value="Zinc/RING finger domain, C3HC4 (zinc finger)"/>
    <property type="match status" value="1"/>
</dbReference>
<dbReference type="InterPro" id="IPR042020">
    <property type="entry name" value="ING3_PHD"/>
</dbReference>
<dbReference type="InterPro" id="IPR028651">
    <property type="entry name" value="ING_fam"/>
</dbReference>
<dbReference type="InterPro" id="IPR024610">
    <property type="entry name" value="ING_N_histone-binding"/>
</dbReference>
<dbReference type="InterPro" id="IPR019786">
    <property type="entry name" value="Zinc_finger_PHD-type_CS"/>
</dbReference>
<dbReference type="InterPro" id="IPR011011">
    <property type="entry name" value="Znf_FYVE_PHD"/>
</dbReference>
<dbReference type="InterPro" id="IPR001965">
    <property type="entry name" value="Znf_PHD"/>
</dbReference>
<dbReference type="InterPro" id="IPR019787">
    <property type="entry name" value="Znf_PHD-finger"/>
</dbReference>
<dbReference type="InterPro" id="IPR013083">
    <property type="entry name" value="Znf_RING/FYVE/PHD"/>
</dbReference>
<dbReference type="PANTHER" id="PTHR10333">
    <property type="entry name" value="INHIBITOR OF GROWTH PROTEIN"/>
    <property type="match status" value="1"/>
</dbReference>
<dbReference type="PANTHER" id="PTHR10333:SF103">
    <property type="entry name" value="INHIBITOR OF GROWTH PROTEIN 3"/>
    <property type="match status" value="1"/>
</dbReference>
<dbReference type="Pfam" id="PF12998">
    <property type="entry name" value="ING"/>
    <property type="match status" value="1"/>
</dbReference>
<dbReference type="SMART" id="SM01408">
    <property type="entry name" value="ING"/>
    <property type="match status" value="1"/>
</dbReference>
<dbReference type="SMART" id="SM00249">
    <property type="entry name" value="PHD"/>
    <property type="match status" value="1"/>
</dbReference>
<dbReference type="SUPFAM" id="SSF57903">
    <property type="entry name" value="FYVE/PHD zinc finger"/>
    <property type="match status" value="1"/>
</dbReference>
<dbReference type="PROSITE" id="PS01359">
    <property type="entry name" value="ZF_PHD_1"/>
    <property type="match status" value="1"/>
</dbReference>
<dbReference type="PROSITE" id="PS50016">
    <property type="entry name" value="ZF_PHD_2"/>
    <property type="match status" value="1"/>
</dbReference>
<evidence type="ECO:0000250" key="1"/>
<evidence type="ECO:0000250" key="2">
    <source>
        <dbReference type="UniProtKB" id="Q9UK53"/>
    </source>
</evidence>
<evidence type="ECO:0000255" key="3">
    <source>
        <dbReference type="PROSITE-ProRule" id="PRU00146"/>
    </source>
</evidence>
<evidence type="ECO:0000256" key="4">
    <source>
        <dbReference type="SAM" id="MobiDB-lite"/>
    </source>
</evidence>
<evidence type="ECO:0000305" key="5"/>
<protein>
    <recommendedName>
        <fullName>Inhibitor of growth protein 3</fullName>
    </recommendedName>
</protein>
<gene>
    <name type="primary">ing3</name>
    <name type="ORF">TNeu023p18.1</name>
</gene>
<sequence length="417" mass="46372">MLYLEDYLEMIEQLPMDLRDRFTEMREMDLQVQNAMDQLEQRVGEFFMNAKKNKPEWREEQMASIKKDYFKALEDADEKVQLANQIYDLVDRHLRKLDQELAKFKMELEADNAGITEILERRSLELDTPSQPVNNHHVHSHSLGEKRKHNPSSHHSTTDHVSEKKFKSEALLSTLTSDASKENTAGCRNNLSSSSTNNVYNVNASQPLTSYNISSLSTGAGAGAITMAAAQAVQATAQMKEGRRTSSLKASYEAFKNNDFQLGISLSRDSATYSSSALASTLTQTLTSSATTDSRSGRKSKSNNKSASQQSSSSSSSSSLSSCSSSSALAHELSHQQTAAIPESDTNSQVDWTYDPNEPRYCICNQVSYGEMVGCDNQDCPIEWFHYGCVGLSEAPKGKWYCPQCTAAMKRRGSRHK</sequence>
<keyword id="KW-0156">Chromatin regulator</keyword>
<keyword id="KW-0341">Growth regulation</keyword>
<keyword id="KW-0479">Metal-binding</keyword>
<keyword id="KW-0539">Nucleus</keyword>
<keyword id="KW-1185">Reference proteome</keyword>
<keyword id="KW-0804">Transcription</keyword>
<keyword id="KW-0805">Transcription regulation</keyword>
<keyword id="KW-0862">Zinc</keyword>
<keyword id="KW-0863">Zinc-finger</keyword>
<feature type="chain" id="PRO_0000354695" description="Inhibitor of growth protein 3">
    <location>
        <begin position="1"/>
        <end position="417"/>
    </location>
</feature>
<feature type="zinc finger region" description="PHD-type" evidence="3">
    <location>
        <begin position="359"/>
        <end position="408"/>
    </location>
</feature>
<feature type="region of interest" description="Disordered" evidence="4">
    <location>
        <begin position="126"/>
        <end position="165"/>
    </location>
</feature>
<feature type="region of interest" description="Disordered" evidence="4">
    <location>
        <begin position="177"/>
        <end position="198"/>
    </location>
</feature>
<feature type="region of interest" description="Disordered" evidence="4">
    <location>
        <begin position="284"/>
        <end position="320"/>
    </location>
</feature>
<feature type="compositionally biased region" description="Basic residues" evidence="4">
    <location>
        <begin position="136"/>
        <end position="152"/>
    </location>
</feature>
<feature type="compositionally biased region" description="Basic and acidic residues" evidence="4">
    <location>
        <begin position="156"/>
        <end position="165"/>
    </location>
</feature>
<feature type="compositionally biased region" description="Polar residues" evidence="4">
    <location>
        <begin position="177"/>
        <end position="187"/>
    </location>
</feature>
<feature type="compositionally biased region" description="Low complexity" evidence="4">
    <location>
        <begin position="189"/>
        <end position="198"/>
    </location>
</feature>
<feature type="compositionally biased region" description="Low complexity" evidence="4">
    <location>
        <begin position="284"/>
        <end position="294"/>
    </location>
</feature>
<feature type="compositionally biased region" description="Low complexity" evidence="4">
    <location>
        <begin position="303"/>
        <end position="320"/>
    </location>
</feature>
<feature type="binding site" evidence="2">
    <location>
        <position position="362"/>
    </location>
    <ligand>
        <name>Zn(2+)</name>
        <dbReference type="ChEBI" id="CHEBI:29105"/>
        <label>1</label>
    </ligand>
</feature>
<feature type="binding site" evidence="2">
    <location>
        <position position="364"/>
    </location>
    <ligand>
        <name>Zn(2+)</name>
        <dbReference type="ChEBI" id="CHEBI:29105"/>
        <label>1</label>
    </ligand>
</feature>
<feature type="binding site" evidence="2">
    <location>
        <position position="375"/>
    </location>
    <ligand>
        <name>Zn(2+)</name>
        <dbReference type="ChEBI" id="CHEBI:29105"/>
        <label>2</label>
    </ligand>
</feature>
<feature type="binding site" evidence="2">
    <location>
        <position position="380"/>
    </location>
    <ligand>
        <name>Zn(2+)</name>
        <dbReference type="ChEBI" id="CHEBI:29105"/>
        <label>2</label>
    </ligand>
</feature>
<feature type="binding site" evidence="2">
    <location>
        <position position="386"/>
    </location>
    <ligand>
        <name>Zn(2+)</name>
        <dbReference type="ChEBI" id="CHEBI:29105"/>
        <label>1</label>
    </ligand>
</feature>
<feature type="binding site" evidence="2">
    <location>
        <position position="389"/>
    </location>
    <ligand>
        <name>Zn(2+)</name>
        <dbReference type="ChEBI" id="CHEBI:29105"/>
        <label>1</label>
    </ligand>
</feature>
<feature type="binding site" evidence="2">
    <location>
        <position position="402"/>
    </location>
    <ligand>
        <name>Zn(2+)</name>
        <dbReference type="ChEBI" id="CHEBI:29105"/>
        <label>2</label>
    </ligand>
</feature>
<feature type="binding site" evidence="2">
    <location>
        <position position="405"/>
    </location>
    <ligand>
        <name>Zn(2+)</name>
        <dbReference type="ChEBI" id="CHEBI:29105"/>
        <label>2</label>
    </ligand>
</feature>
<feature type="site" description="Histone H3K4me3 binding" evidence="2">
    <location>
        <position position="361"/>
    </location>
</feature>
<feature type="site" description="Histone H3K4me3 binding" evidence="2">
    <location>
        <position position="372"/>
    </location>
</feature>
<feature type="site" description="Histone H3K4me3 binding" evidence="2">
    <location>
        <position position="376"/>
    </location>
</feature>
<feature type="site" description="Histone H3K4me3 binding" evidence="2">
    <location>
        <position position="384"/>
    </location>
</feature>
<organism>
    <name type="scientific">Xenopus tropicalis</name>
    <name type="common">Western clawed frog</name>
    <name type="synonym">Silurana tropicalis</name>
    <dbReference type="NCBI Taxonomy" id="8364"/>
    <lineage>
        <taxon>Eukaryota</taxon>
        <taxon>Metazoa</taxon>
        <taxon>Chordata</taxon>
        <taxon>Craniata</taxon>
        <taxon>Vertebrata</taxon>
        <taxon>Euteleostomi</taxon>
        <taxon>Amphibia</taxon>
        <taxon>Batrachia</taxon>
        <taxon>Anura</taxon>
        <taxon>Pipoidea</taxon>
        <taxon>Pipidae</taxon>
        <taxon>Xenopodinae</taxon>
        <taxon>Xenopus</taxon>
        <taxon>Silurana</taxon>
    </lineage>
</organism>
<accession>Q66KD5</accession>
<proteinExistence type="evidence at transcript level"/>